<name>GATM_MACFA</name>
<keyword id="KW-0007">Acetylation</keyword>
<keyword id="KW-0472">Membrane</keyword>
<keyword id="KW-0496">Mitochondrion</keyword>
<keyword id="KW-0999">Mitochondrion inner membrane</keyword>
<keyword id="KW-0597">Phosphoprotein</keyword>
<keyword id="KW-1185">Reference proteome</keyword>
<keyword id="KW-0808">Transferase</keyword>
<keyword id="KW-0809">Transit peptide</keyword>
<gene>
    <name type="primary">GATM</name>
    <name type="ORF">QtsA-13880</name>
</gene>
<reference key="1">
    <citation type="submission" date="2005-06" db="EMBL/GenBank/DDBJ databases">
        <title>DNA sequences of macaque genes expressed in brain or testis and its evolutionary implications.</title>
        <authorList>
            <consortium name="International consortium for macaque cDNA sequencing and analysis"/>
        </authorList>
    </citation>
    <scope>NUCLEOTIDE SEQUENCE [LARGE SCALE MRNA]</scope>
    <source>
        <tissue>Testis</tissue>
    </source>
</reference>
<comment type="function">
    <text evidence="2">Transamidinase that catalyzes the transfer of the amidino group of L-arginine onto the amino moiety of acceptor metabolites such as glycine, beta-alanine, gamma-aminobutyric acid (GABA) and taurine yielding the corresponding guanidine derivatives (By similarity). Catalyzes the rate-limiting step of creatine biosynthesis, namely the transfer of the amidino group from L-arginine to glycine to generate guanidinoacetate, which is then methylated by GAMT to form creatine. Provides creatine as a source for ATP generation in tissues with high energy demands, in particular skeletal muscle, heart and brain (By similarity).</text>
</comment>
<comment type="catalytic activity">
    <reaction evidence="2">
        <text>L-arginine + glycine = guanidinoacetate + L-ornithine</text>
        <dbReference type="Rhea" id="RHEA:13201"/>
        <dbReference type="ChEBI" id="CHEBI:32682"/>
        <dbReference type="ChEBI" id="CHEBI:46911"/>
        <dbReference type="ChEBI" id="CHEBI:57305"/>
        <dbReference type="ChEBI" id="CHEBI:57742"/>
        <dbReference type="EC" id="2.1.4.1"/>
    </reaction>
    <physiologicalReaction direction="left-to-right" evidence="2">
        <dbReference type="Rhea" id="RHEA:13202"/>
    </physiologicalReaction>
</comment>
<comment type="catalytic activity">
    <reaction evidence="2">
        <text>4-aminobutanoate + L-arginine = 4-guanidinobutanoate + L-ornithine</text>
        <dbReference type="Rhea" id="RHEA:75939"/>
        <dbReference type="ChEBI" id="CHEBI:32682"/>
        <dbReference type="ChEBI" id="CHEBI:46911"/>
        <dbReference type="ChEBI" id="CHEBI:57486"/>
        <dbReference type="ChEBI" id="CHEBI:59888"/>
    </reaction>
    <physiologicalReaction direction="left-to-right" evidence="2">
        <dbReference type="Rhea" id="RHEA:75940"/>
    </physiologicalReaction>
</comment>
<comment type="catalytic activity">
    <reaction evidence="2">
        <text>beta-alanine + L-arginine = 3-guanidinopropanoate + L-ornithine</text>
        <dbReference type="Rhea" id="RHEA:75943"/>
        <dbReference type="ChEBI" id="CHEBI:32682"/>
        <dbReference type="ChEBI" id="CHEBI:46911"/>
        <dbReference type="ChEBI" id="CHEBI:57593"/>
        <dbReference type="ChEBI" id="CHEBI:57966"/>
    </reaction>
    <physiologicalReaction direction="left-to-right" evidence="2">
        <dbReference type="Rhea" id="RHEA:75944"/>
    </physiologicalReaction>
</comment>
<comment type="catalytic activity">
    <reaction evidence="2">
        <text>taurine + L-arginine = taurocyamine + L-ornithine</text>
        <dbReference type="Rhea" id="RHEA:75947"/>
        <dbReference type="ChEBI" id="CHEBI:32682"/>
        <dbReference type="ChEBI" id="CHEBI:46911"/>
        <dbReference type="ChEBI" id="CHEBI:58064"/>
        <dbReference type="ChEBI" id="CHEBI:507393"/>
    </reaction>
    <physiologicalReaction direction="left-to-right" evidence="2">
        <dbReference type="Rhea" id="RHEA:75948"/>
    </physiologicalReaction>
</comment>
<comment type="pathway">
    <text evidence="2">Amine and polyamine biosynthesis; creatine biosynthesis; creatine from L-arginine and glycine: step 1/2.</text>
</comment>
<comment type="subunit">
    <text evidence="2">Homodimer.</text>
</comment>
<comment type="subcellular location">
    <subcellularLocation>
        <location evidence="1">Mitochondrion inner membrane</location>
    </subcellularLocation>
</comment>
<comment type="similarity">
    <text evidence="4">Belongs to the amidinotransferase family.</text>
</comment>
<protein>
    <recommendedName>
        <fullName>Glycine amidinotransferase, mitochondrial</fullName>
        <ecNumber evidence="2">2.1.4.1</ecNumber>
    </recommendedName>
    <alternativeName>
        <fullName>L-arginine:glycine amidinotransferase</fullName>
    </alternativeName>
    <alternativeName>
        <fullName>Transamidinase</fullName>
    </alternativeName>
</protein>
<organism>
    <name type="scientific">Macaca fascicularis</name>
    <name type="common">Crab-eating macaque</name>
    <name type="synonym">Cynomolgus monkey</name>
    <dbReference type="NCBI Taxonomy" id="9541"/>
    <lineage>
        <taxon>Eukaryota</taxon>
        <taxon>Metazoa</taxon>
        <taxon>Chordata</taxon>
        <taxon>Craniata</taxon>
        <taxon>Vertebrata</taxon>
        <taxon>Euteleostomi</taxon>
        <taxon>Mammalia</taxon>
        <taxon>Eutheria</taxon>
        <taxon>Euarchontoglires</taxon>
        <taxon>Primates</taxon>
        <taxon>Haplorrhini</taxon>
        <taxon>Catarrhini</taxon>
        <taxon>Cercopithecidae</taxon>
        <taxon>Cercopithecinae</taxon>
        <taxon>Macaca</taxon>
    </lineage>
</organism>
<evidence type="ECO:0000250" key="1"/>
<evidence type="ECO:0000250" key="2">
    <source>
        <dbReference type="UniProtKB" id="P50440"/>
    </source>
</evidence>
<evidence type="ECO:0000256" key="3">
    <source>
        <dbReference type="SAM" id="MobiDB-lite"/>
    </source>
</evidence>
<evidence type="ECO:0000305" key="4"/>
<proteinExistence type="evidence at transcript level"/>
<sequence length="423" mass="48599">MLRVRCLRGGSRGAEAVHYIGSRLGRTLTGWVQRTFQSTQAATASSRNSFAADDKATEPLPKDCPVSSYNEWDPLEEVIVGRAENARVPPFTIEVKANTYEKYWPFYQKHGGHYFPKDHLKKAVTEIEEMCNILKMEGVTVRRPDPIDWSLKYKTPDFESTGLYSAMPRDILIVVGNEIIEAPMAWRSRFFEYRAYRSIIKDYFHRGAKWTTAPKPTMADELYDRDYPIHSVEDRHKLAAQGKFVTTEFEPCFDAADFIRAGKDIFAQRSQVTNYLGIEWMRRHLAPDYRVHIISFKDPNPMHIDATFNIIGPGTVLSNPDRPCHQIDLFKKAGWTIITPPTPIIPDDHPLWMSSKWLSMNVLMLDEKRVMVDANEVPTQKMFEKLGITTIKVNIRNANSLGGGFHCWTCDVRRRGTLQSYLD</sequence>
<feature type="transit peptide" description="Mitochondrion" evidence="1">
    <location>
        <begin position="1"/>
        <end position="43"/>
    </location>
</feature>
<feature type="chain" id="PRO_0000231594" description="Glycine amidinotransferase, mitochondrial">
    <location>
        <begin position="44"/>
        <end position="423"/>
    </location>
</feature>
<feature type="region of interest" description="Disordered" evidence="3">
    <location>
        <begin position="43"/>
        <end position="63"/>
    </location>
</feature>
<feature type="compositionally biased region" description="Basic and acidic residues" evidence="3">
    <location>
        <begin position="52"/>
        <end position="61"/>
    </location>
</feature>
<feature type="active site" evidence="2">
    <location>
        <position position="254"/>
    </location>
</feature>
<feature type="active site" evidence="2">
    <location>
        <position position="303"/>
    </location>
</feature>
<feature type="active site" description="Amidino-cysteine intermediate" evidence="2">
    <location>
        <position position="407"/>
    </location>
</feature>
<feature type="binding site" evidence="2">
    <location>
        <position position="170"/>
    </location>
    <ligand>
        <name>arginine</name>
        <dbReference type="ChEBI" id="CHEBI:32696"/>
    </ligand>
</feature>
<feature type="binding site" evidence="2">
    <location>
        <position position="305"/>
    </location>
    <ligand>
        <name>arginine</name>
        <dbReference type="ChEBI" id="CHEBI:32696"/>
    </ligand>
</feature>
<feature type="binding site" evidence="2">
    <location>
        <position position="322"/>
    </location>
    <ligand>
        <name>arginine</name>
        <dbReference type="ChEBI" id="CHEBI:32696"/>
    </ligand>
</feature>
<feature type="binding site" evidence="2">
    <location>
        <position position="354"/>
    </location>
    <ligand>
        <name>arginine</name>
        <dbReference type="ChEBI" id="CHEBI:32696"/>
    </ligand>
</feature>
<feature type="binding site" evidence="2">
    <location>
        <position position="355"/>
    </location>
    <ligand>
        <name>arginine</name>
        <dbReference type="ChEBI" id="CHEBI:32696"/>
    </ligand>
</feature>
<feature type="modified residue" description="Phosphoserine" evidence="2">
    <location>
        <position position="46"/>
    </location>
</feature>
<feature type="modified residue" description="Phosphoserine" evidence="2">
    <location>
        <position position="49"/>
    </location>
</feature>
<feature type="modified residue" description="N6-acetyllysine" evidence="2">
    <location>
        <position position="385"/>
    </location>
</feature>
<accession>Q4R806</accession>
<dbReference type="EC" id="2.1.4.1" evidence="2"/>
<dbReference type="EMBL" id="AB168655">
    <property type="protein sequence ID" value="BAE00766.1"/>
    <property type="molecule type" value="mRNA"/>
</dbReference>
<dbReference type="SMR" id="Q4R806"/>
<dbReference type="STRING" id="9541.ENSMFAP00000033024"/>
<dbReference type="eggNOG" id="ENOG502QVCA">
    <property type="taxonomic scope" value="Eukaryota"/>
</dbReference>
<dbReference type="UniPathway" id="UPA00104">
    <property type="reaction ID" value="UER00579"/>
</dbReference>
<dbReference type="Proteomes" id="UP000233100">
    <property type="component" value="Unplaced"/>
</dbReference>
<dbReference type="GO" id="GO:0005743">
    <property type="term" value="C:mitochondrial inner membrane"/>
    <property type="evidence" value="ECO:0007669"/>
    <property type="project" value="UniProtKB-SubCell"/>
</dbReference>
<dbReference type="GO" id="GO:0005758">
    <property type="term" value="C:mitochondrial intermembrane space"/>
    <property type="evidence" value="ECO:0007669"/>
    <property type="project" value="TreeGrafter"/>
</dbReference>
<dbReference type="GO" id="GO:0015067">
    <property type="term" value="F:amidinotransferase activity"/>
    <property type="evidence" value="ECO:0000250"/>
    <property type="project" value="UniProtKB"/>
</dbReference>
<dbReference type="GO" id="GO:0015068">
    <property type="term" value="F:glycine amidinotransferase activity"/>
    <property type="evidence" value="ECO:0000250"/>
    <property type="project" value="UniProtKB"/>
</dbReference>
<dbReference type="GO" id="GO:0006601">
    <property type="term" value="P:creatine biosynthetic process"/>
    <property type="evidence" value="ECO:0007669"/>
    <property type="project" value="UniProtKB-UniPathway"/>
</dbReference>
<dbReference type="CDD" id="cd21136">
    <property type="entry name" value="amidinotransferase_AGAT-like"/>
    <property type="match status" value="1"/>
</dbReference>
<dbReference type="FunFam" id="3.75.10.10:FF:000005">
    <property type="entry name" value="Glycine amidinotransferase, mitochondrial"/>
    <property type="match status" value="1"/>
</dbReference>
<dbReference type="Gene3D" id="3.75.10.10">
    <property type="entry name" value="L-arginine/glycine Amidinotransferase, Chain A"/>
    <property type="match status" value="1"/>
</dbReference>
<dbReference type="InterPro" id="IPR033195">
    <property type="entry name" value="AmidinoTrfase"/>
</dbReference>
<dbReference type="PANTHER" id="PTHR10488">
    <property type="entry name" value="GLYCINE AMIDINOTRANSFERASE, MITOCHONDRIAL"/>
    <property type="match status" value="1"/>
</dbReference>
<dbReference type="PANTHER" id="PTHR10488:SF1">
    <property type="entry name" value="GLYCINE AMIDINOTRANSFERASE, MITOCHONDRIAL"/>
    <property type="match status" value="1"/>
</dbReference>
<dbReference type="SUPFAM" id="SSF55909">
    <property type="entry name" value="Pentein"/>
    <property type="match status" value="1"/>
</dbReference>